<evidence type="ECO:0000250" key="1"/>
<evidence type="ECO:0000255" key="2"/>
<evidence type="ECO:0000255" key="3">
    <source>
        <dbReference type="PROSITE-ProRule" id="PRU00043"/>
    </source>
</evidence>
<evidence type="ECO:0000256" key="4">
    <source>
        <dbReference type="SAM" id="MobiDB-lite"/>
    </source>
</evidence>
<evidence type="ECO:0000269" key="5">
    <source>
    </source>
</evidence>
<evidence type="ECO:0000303" key="6">
    <source>
    </source>
</evidence>
<evidence type="ECO:0007829" key="7">
    <source>
        <dbReference type="PDB" id="5K8R"/>
    </source>
</evidence>
<evidence type="ECO:0007829" key="8">
    <source>
        <dbReference type="PDB" id="6MEQ"/>
    </source>
</evidence>
<sequence>MGNSSGWRGPAGQRRMLFLFLLSLLDQALSEPIRYAIPEELDRGSLVGNLAKDLGFGVGDLPTRNLRVIAEKKFFTVSPENGNLLVSDRIDREEICGKKSTCVLEFEMVAEKPLNFFHVTVLIQDINDNPPTFSQNITELEISELALTGATFALESAQDPDVGVNSLQQYYLSPDPHFSLIQKENLDGSRYPELVLKAPLDREEQPHHHLVLTAVDGGEPSRSCTTQIRVIVADANDNPPVFTQDMYRVNVAENLPAGSSVLKVMAIDMDEGINAEIIYAFINIGKEVRQLFKLDSKTGELTTIGELDFEERDSYTIGVEAKDGGHHTAYCKVQIDISDENDNAPEITLASESQHIQEDAELGTAVALIKTHDLDSGFNGEILCQLKGNFPFKIVQDTKNTYRLVTDGALDREQIPEYNVTITATDKGNPPLSSSKTITLHILDVNDNVPVFHQASYTVHVAENNPPGASIAHVRASDPDLGPNGLVSYYIVASDLEPRELSSYVSVSARSGVVFAQRAFDHEQLRAFELTLQARDQGSPTLSANVSLRVLVDDRNDNAPLVLYPALGPEGSALFDMVPRSAEPGYLVTKVVAVDADSGYNAWLSYHIVQASEPGLFSLGLRTGEVRTARTLGDREAARQRLLVTVRDGGQQPLSATVMLHLIFADSLQEIQPDLSDRPTPSDPQAELQFHLVVALALISVLFLLAVILAISLRLRCSSRPATEGYFQPGVCFKTVPGVLPTYSERTLPYSYNPCAASHSSNTEFKFLNIKAENAAPQDLLCDEASWFESNDNPEMPSNSGNLQKQAPPNTDWRFSQAQRPGTSGSQNGDDTGTWPNNQFDTEMLQAMILASASEAADGSSTLGGGAGTMGLSARYGPQFTLQHVPDYRQNVYIPGSNATLTNAAGKRDGKAPAGGNGNKKKSGKKEKK</sequence>
<gene>
    <name type="primary">PCDHGB3</name>
</gene>
<comment type="function">
    <text>Potential calcium-dependent cell-adhesion protein. May be involved in the establishment and maintenance of specific neuronal connections in the brain.</text>
</comment>
<comment type="subcellular location">
    <subcellularLocation>
        <location evidence="1">Cell membrane</location>
        <topology evidence="1">Single-pass type I membrane protein</topology>
    </subcellularLocation>
</comment>
<comment type="alternative products">
    <event type="alternative splicing"/>
    <isoform>
        <id>Q9Y5G1-1</id>
        <name>1</name>
        <sequence type="displayed"/>
    </isoform>
    <isoform>
        <id>Q9Y5G1-2</id>
        <name>2</name>
        <name>Short</name>
        <sequence type="described" ref="VSP_008688 VSP_008689"/>
    </isoform>
</comment>
<name>PCDGF_HUMAN</name>
<dbReference type="EMBL" id="AF152332">
    <property type="protein sequence ID" value="AAD43726.1"/>
    <property type="molecule type" value="mRNA"/>
</dbReference>
<dbReference type="EMBL" id="AF152519">
    <property type="protein sequence ID" value="AAD43779.1"/>
    <property type="molecule type" value="mRNA"/>
</dbReference>
<dbReference type="EMBL" id="AC005366">
    <property type="status" value="NOT_ANNOTATED_CDS"/>
    <property type="molecule type" value="Genomic_DNA"/>
</dbReference>
<dbReference type="EMBL" id="AC005618">
    <property type="status" value="NOT_ANNOTATED_CDS"/>
    <property type="molecule type" value="Genomic_DNA"/>
</dbReference>
<dbReference type="EMBL" id="AC008781">
    <property type="status" value="NOT_ANNOTATED_CDS"/>
    <property type="molecule type" value="Genomic_DNA"/>
</dbReference>
<dbReference type="EMBL" id="CH471062">
    <property type="protein sequence ID" value="EAW61951.1"/>
    <property type="molecule type" value="Genomic_DNA"/>
</dbReference>
<dbReference type="EMBL" id="BC150172">
    <property type="protein sequence ID" value="AAI50173.1"/>
    <property type="molecule type" value="mRNA"/>
</dbReference>
<dbReference type="CCDS" id="CCDS58980.1">
    <molecule id="Q9Y5G1-1"/>
</dbReference>
<dbReference type="CCDS" id="CCDS75334.1">
    <molecule id="Q9Y5G1-2"/>
</dbReference>
<dbReference type="RefSeq" id="NP_061747.2">
    <molecule id="Q9Y5G1-1"/>
    <property type="nucleotide sequence ID" value="NM_018924.5"/>
</dbReference>
<dbReference type="RefSeq" id="NP_115268.2">
    <molecule id="Q9Y5G1-2"/>
    <property type="nucleotide sequence ID" value="NM_032097.3"/>
</dbReference>
<dbReference type="PDB" id="5K8R">
    <property type="method" value="X-ray"/>
    <property type="resolution" value="2.50 A"/>
    <property type="chains" value="A=31-444"/>
</dbReference>
<dbReference type="PDB" id="6MEQ">
    <property type="method" value="X-ray"/>
    <property type="resolution" value="2.90 A"/>
    <property type="chains" value="A=31-444"/>
</dbReference>
<dbReference type="PDB" id="6MER">
    <property type="method" value="X-ray"/>
    <property type="resolution" value="3.00 A"/>
    <property type="chains" value="A=31-444"/>
</dbReference>
<dbReference type="PDBsum" id="5K8R"/>
<dbReference type="PDBsum" id="6MEQ"/>
<dbReference type="PDBsum" id="6MER"/>
<dbReference type="SMR" id="Q9Y5G1"/>
<dbReference type="BioGRID" id="121042">
    <property type="interactions" value="8"/>
</dbReference>
<dbReference type="FunCoup" id="Q9Y5G1">
    <property type="interactions" value="120"/>
</dbReference>
<dbReference type="IntAct" id="Q9Y5G1">
    <property type="interactions" value="6"/>
</dbReference>
<dbReference type="STRING" id="9606.ENSP00000461862"/>
<dbReference type="GlyCosmos" id="Q9Y5G1">
    <property type="glycosylation" value="3 sites, No reported glycans"/>
</dbReference>
<dbReference type="GlyGen" id="Q9Y5G1">
    <property type="glycosylation" value="4 sites"/>
</dbReference>
<dbReference type="iPTMnet" id="Q9Y5G1"/>
<dbReference type="PhosphoSitePlus" id="Q9Y5G1"/>
<dbReference type="BioMuta" id="PCDHGB3"/>
<dbReference type="DMDM" id="442570291"/>
<dbReference type="jPOST" id="Q9Y5G1"/>
<dbReference type="MassIVE" id="Q9Y5G1"/>
<dbReference type="PaxDb" id="9606-ENSP00000461862"/>
<dbReference type="PeptideAtlas" id="Q9Y5G1"/>
<dbReference type="ProteomicsDB" id="86363">
    <molecule id="Q9Y5G1-1"/>
</dbReference>
<dbReference type="ProteomicsDB" id="86364">
    <molecule id="Q9Y5G1-2"/>
</dbReference>
<dbReference type="Antibodypedia" id="62672">
    <property type="antibodies" value="24 antibodies from 13 providers"/>
</dbReference>
<dbReference type="DNASU" id="56102"/>
<dbReference type="Ensembl" id="ENST00000576222.2">
    <molecule id="Q9Y5G1-1"/>
    <property type="protein sequence ID" value="ENSP00000461862.1"/>
    <property type="gene ID" value="ENSG00000262209.3"/>
</dbReference>
<dbReference type="Ensembl" id="ENST00000618934.1">
    <molecule id="Q9Y5G1-2"/>
    <property type="protein sequence ID" value="ENSP00000483339.1"/>
    <property type="gene ID" value="ENSG00000262209.3"/>
</dbReference>
<dbReference type="GeneID" id="56102"/>
<dbReference type="KEGG" id="hsa:56102"/>
<dbReference type="MANE-Select" id="ENST00000576222.2">
    <property type="protein sequence ID" value="ENSP00000461862.1"/>
    <property type="RefSeq nucleotide sequence ID" value="NM_018924.5"/>
    <property type="RefSeq protein sequence ID" value="NP_061747.2"/>
</dbReference>
<dbReference type="UCSC" id="uc003ljw.3">
    <molecule id="Q9Y5G1-1"/>
    <property type="organism name" value="human"/>
</dbReference>
<dbReference type="AGR" id="HGNC:8710"/>
<dbReference type="CTD" id="56102"/>
<dbReference type="DisGeNET" id="56102"/>
<dbReference type="GeneCards" id="PCDHGB3"/>
<dbReference type="HGNC" id="HGNC:8710">
    <property type="gene designation" value="PCDHGB3"/>
</dbReference>
<dbReference type="HPA" id="ENSG00000262209">
    <property type="expression patterns" value="Low tissue specificity"/>
</dbReference>
<dbReference type="MalaCards" id="PCDHGB3"/>
<dbReference type="MIM" id="604968">
    <property type="type" value="gene"/>
</dbReference>
<dbReference type="MIM" id="606301">
    <property type="type" value="gene"/>
</dbReference>
<dbReference type="neXtProt" id="NX_Q9Y5G1"/>
<dbReference type="PharmGKB" id="PA33058"/>
<dbReference type="VEuPathDB" id="HostDB:ENSG00000262209"/>
<dbReference type="eggNOG" id="KOG3594">
    <property type="taxonomic scope" value="Eukaryota"/>
</dbReference>
<dbReference type="GeneTree" id="ENSGT00940000163837"/>
<dbReference type="HOGENOM" id="CLU_006480_3_0_1"/>
<dbReference type="InParanoid" id="Q9Y5G1"/>
<dbReference type="OMA" id="CHHLVLM"/>
<dbReference type="OrthoDB" id="6252479at2759"/>
<dbReference type="PAN-GO" id="Q9Y5G1">
    <property type="GO annotations" value="2 GO annotations based on evolutionary models"/>
</dbReference>
<dbReference type="PhylomeDB" id="Q9Y5G1"/>
<dbReference type="TreeFam" id="TF332299"/>
<dbReference type="PathwayCommons" id="Q9Y5G1"/>
<dbReference type="SignaLink" id="Q9Y5G1"/>
<dbReference type="SIGNOR" id="Q9Y5G1"/>
<dbReference type="BioGRID-ORCS" id="56102">
    <property type="hits" value="10 hits in 1096 CRISPR screens"/>
</dbReference>
<dbReference type="GenomeRNAi" id="56102"/>
<dbReference type="Pharos" id="Q9Y5G1">
    <property type="development level" value="Tdark"/>
</dbReference>
<dbReference type="PRO" id="PR:Q9Y5G1"/>
<dbReference type="Proteomes" id="UP000005640">
    <property type="component" value="Chromosome 5"/>
</dbReference>
<dbReference type="RNAct" id="Q9Y5G1">
    <property type="molecule type" value="protein"/>
</dbReference>
<dbReference type="Bgee" id="ENSG00000262209">
    <property type="expression patterns" value="Expressed in male germ line stem cell (sensu Vertebrata) in testis and 96 other cell types or tissues"/>
</dbReference>
<dbReference type="GO" id="GO:0005886">
    <property type="term" value="C:plasma membrane"/>
    <property type="evidence" value="ECO:0000318"/>
    <property type="project" value="GO_Central"/>
</dbReference>
<dbReference type="GO" id="GO:0005509">
    <property type="term" value="F:calcium ion binding"/>
    <property type="evidence" value="ECO:0007669"/>
    <property type="project" value="InterPro"/>
</dbReference>
<dbReference type="GO" id="GO:0007155">
    <property type="term" value="P:cell adhesion"/>
    <property type="evidence" value="ECO:0000318"/>
    <property type="project" value="GO_Central"/>
</dbReference>
<dbReference type="GO" id="GO:0007156">
    <property type="term" value="P:homophilic cell adhesion via plasma membrane adhesion molecules"/>
    <property type="evidence" value="ECO:0007669"/>
    <property type="project" value="InterPro"/>
</dbReference>
<dbReference type="GO" id="GO:0007399">
    <property type="term" value="P:nervous system development"/>
    <property type="evidence" value="ECO:0007669"/>
    <property type="project" value="UniProtKB-ARBA"/>
</dbReference>
<dbReference type="CDD" id="cd11304">
    <property type="entry name" value="Cadherin_repeat"/>
    <property type="match status" value="5"/>
</dbReference>
<dbReference type="FunFam" id="2.60.40.60:FF:000004">
    <property type="entry name" value="Protocadherin 1 gamma 2"/>
    <property type="match status" value="1"/>
</dbReference>
<dbReference type="FunFam" id="2.60.40.60:FF:000001">
    <property type="entry name" value="Protocadherin alpha 2"/>
    <property type="match status" value="1"/>
</dbReference>
<dbReference type="FunFam" id="2.60.40.60:FF:000002">
    <property type="entry name" value="Protocadherin alpha 2"/>
    <property type="match status" value="1"/>
</dbReference>
<dbReference type="FunFam" id="2.60.40.60:FF:000006">
    <property type="entry name" value="Protocadherin alpha 2"/>
    <property type="match status" value="1"/>
</dbReference>
<dbReference type="FunFam" id="2.60.40.60:FF:000129">
    <property type="entry name" value="protocadherin alpha-C2 isoform X1"/>
    <property type="match status" value="1"/>
</dbReference>
<dbReference type="FunFam" id="2.60.40.60:FF:000018">
    <property type="entry name" value="Protocadherin gamma c3"/>
    <property type="match status" value="1"/>
</dbReference>
<dbReference type="Gene3D" id="2.60.40.60">
    <property type="entry name" value="Cadherins"/>
    <property type="match status" value="6"/>
</dbReference>
<dbReference type="InterPro" id="IPR002126">
    <property type="entry name" value="Cadherin-like_dom"/>
</dbReference>
<dbReference type="InterPro" id="IPR015919">
    <property type="entry name" value="Cadherin-like_sf"/>
</dbReference>
<dbReference type="InterPro" id="IPR032455">
    <property type="entry name" value="Cadherin_C"/>
</dbReference>
<dbReference type="InterPro" id="IPR031904">
    <property type="entry name" value="Cadherin_CBD"/>
</dbReference>
<dbReference type="InterPro" id="IPR020894">
    <property type="entry name" value="Cadherin_CS"/>
</dbReference>
<dbReference type="InterPro" id="IPR013164">
    <property type="entry name" value="Cadherin_N"/>
</dbReference>
<dbReference type="InterPro" id="IPR050174">
    <property type="entry name" value="Protocadherin/Cadherin-CA"/>
</dbReference>
<dbReference type="PANTHER" id="PTHR24028">
    <property type="entry name" value="CADHERIN-87A"/>
    <property type="match status" value="1"/>
</dbReference>
<dbReference type="PANTHER" id="PTHR24028:SF73">
    <property type="entry name" value="PROTOCADHERIN GAMMA-B3-RELATED"/>
    <property type="match status" value="1"/>
</dbReference>
<dbReference type="Pfam" id="PF00028">
    <property type="entry name" value="Cadherin"/>
    <property type="match status" value="5"/>
</dbReference>
<dbReference type="Pfam" id="PF08266">
    <property type="entry name" value="Cadherin_2"/>
    <property type="match status" value="1"/>
</dbReference>
<dbReference type="Pfam" id="PF16492">
    <property type="entry name" value="Cadherin_C_2"/>
    <property type="match status" value="1"/>
</dbReference>
<dbReference type="Pfam" id="PF15974">
    <property type="entry name" value="Cadherin_tail"/>
    <property type="match status" value="1"/>
</dbReference>
<dbReference type="PRINTS" id="PR00205">
    <property type="entry name" value="CADHERIN"/>
</dbReference>
<dbReference type="SMART" id="SM00112">
    <property type="entry name" value="CA"/>
    <property type="match status" value="6"/>
</dbReference>
<dbReference type="SUPFAM" id="SSF49313">
    <property type="entry name" value="Cadherin-like"/>
    <property type="match status" value="6"/>
</dbReference>
<dbReference type="PROSITE" id="PS00232">
    <property type="entry name" value="CADHERIN_1"/>
    <property type="match status" value="5"/>
</dbReference>
<dbReference type="PROSITE" id="PS50268">
    <property type="entry name" value="CADHERIN_2"/>
    <property type="match status" value="6"/>
</dbReference>
<feature type="signal peptide" evidence="2">
    <location>
        <begin position="1"/>
        <end position="30"/>
    </location>
</feature>
<feature type="chain" id="PRO_0000003976" description="Protocadherin gamma-B3">
    <location>
        <begin position="31"/>
        <end position="929"/>
    </location>
</feature>
<feature type="topological domain" description="Extracellular" evidence="2">
    <location>
        <begin position="31"/>
        <end position="691"/>
    </location>
</feature>
<feature type="transmembrane region" description="Helical" evidence="2">
    <location>
        <begin position="692"/>
        <end position="712"/>
    </location>
</feature>
<feature type="topological domain" description="Cytoplasmic" evidence="2">
    <location>
        <begin position="713"/>
        <end position="929"/>
    </location>
</feature>
<feature type="domain" description="Cadherin 1" evidence="3">
    <location>
        <begin position="31"/>
        <end position="133"/>
    </location>
</feature>
<feature type="domain" description="Cadherin 2" evidence="3">
    <location>
        <begin position="134"/>
        <end position="242"/>
    </location>
</feature>
<feature type="domain" description="Cadherin 3" evidence="3">
    <location>
        <begin position="243"/>
        <end position="347"/>
    </location>
</feature>
<feature type="domain" description="Cadherin 4" evidence="3">
    <location>
        <begin position="348"/>
        <end position="452"/>
    </location>
</feature>
<feature type="domain" description="Cadherin 5" evidence="3">
    <location>
        <begin position="453"/>
        <end position="562"/>
    </location>
</feature>
<feature type="domain" description="Cadherin 6" evidence="3">
    <location>
        <begin position="570"/>
        <end position="675"/>
    </location>
</feature>
<feature type="region of interest" description="Disordered" evidence="4">
    <location>
        <begin position="791"/>
        <end position="838"/>
    </location>
</feature>
<feature type="region of interest" description="Disordered" evidence="4">
    <location>
        <begin position="899"/>
        <end position="929"/>
    </location>
</feature>
<feature type="compositionally biased region" description="Basic residues" evidence="4">
    <location>
        <begin position="919"/>
        <end position="929"/>
    </location>
</feature>
<feature type="glycosylation site" description="N-linked (GlcNAc...) asparagine" evidence="2">
    <location>
        <position position="136"/>
    </location>
</feature>
<feature type="glycosylation site" description="N-linked (GlcNAc...) asparagine" evidence="2">
    <location>
        <position position="419"/>
    </location>
</feature>
<feature type="glycosylation site" description="N-linked (GlcNAc...) asparagine" evidence="2">
    <location>
        <position position="545"/>
    </location>
</feature>
<feature type="splice variant" id="VSP_008688" description="In isoform 2." evidence="6">
    <original>QAPPNTDWR</original>
    <variation>VSFFKPFLP</variation>
    <location>
        <begin position="806"/>
        <end position="814"/>
    </location>
</feature>
<feature type="splice variant" id="VSP_008689" description="In isoform 2." evidence="6">
    <location>
        <begin position="815"/>
        <end position="929"/>
    </location>
</feature>
<feature type="sequence variant" id="VAR_048569" description="In dbSNP:rs6860590.">
    <original>F</original>
    <variation>Y</variation>
    <location>
        <position position="20"/>
    </location>
</feature>
<feature type="sequence variant" id="VAR_061073" description="In dbSNP:rs6860609." evidence="5">
    <original>A</original>
    <variation>V</variation>
    <location>
        <position position="28"/>
    </location>
</feature>
<feature type="sequence variant" id="VAR_048570" description="In dbSNP:rs2240697.">
    <original>N</original>
    <variation>K</variation>
    <location>
        <position position="389"/>
    </location>
</feature>
<feature type="strand" evidence="7">
    <location>
        <begin position="33"/>
        <end position="40"/>
    </location>
</feature>
<feature type="strand" evidence="7">
    <location>
        <begin position="46"/>
        <end position="49"/>
    </location>
</feature>
<feature type="helix" evidence="7">
    <location>
        <begin position="50"/>
        <end position="53"/>
    </location>
</feature>
<feature type="helix" evidence="7">
    <location>
        <begin position="58"/>
        <end position="60"/>
    </location>
</feature>
<feature type="helix" evidence="7">
    <location>
        <begin position="61"/>
        <end position="64"/>
    </location>
</feature>
<feature type="strand" evidence="7">
    <location>
        <begin position="67"/>
        <end position="69"/>
    </location>
</feature>
<feature type="strand" evidence="7">
    <location>
        <begin position="75"/>
        <end position="77"/>
    </location>
</feature>
<feature type="turn" evidence="7">
    <location>
        <begin position="79"/>
        <end position="81"/>
    </location>
</feature>
<feature type="strand" evidence="7">
    <location>
        <begin position="83"/>
        <end position="86"/>
    </location>
</feature>
<feature type="helix" evidence="7">
    <location>
        <begin position="92"/>
        <end position="95"/>
    </location>
</feature>
<feature type="turn" evidence="7">
    <location>
        <begin position="96"/>
        <end position="98"/>
    </location>
</feature>
<feature type="strand" evidence="7">
    <location>
        <begin position="103"/>
        <end position="110"/>
    </location>
</feature>
<feature type="turn" evidence="7">
    <location>
        <begin position="111"/>
        <end position="114"/>
    </location>
</feature>
<feature type="strand" evidence="7">
    <location>
        <begin position="115"/>
        <end position="124"/>
    </location>
</feature>
<feature type="strand" evidence="7">
    <location>
        <begin position="136"/>
        <end position="143"/>
    </location>
</feature>
<feature type="strand" evidence="7">
    <location>
        <begin position="151"/>
        <end position="153"/>
    </location>
</feature>
<feature type="helix" evidence="7">
    <location>
        <begin position="163"/>
        <end position="165"/>
    </location>
</feature>
<feature type="strand" evidence="7">
    <location>
        <begin position="168"/>
        <end position="172"/>
    </location>
</feature>
<feature type="strand" evidence="7">
    <location>
        <begin position="176"/>
        <end position="184"/>
    </location>
</feature>
<feature type="strand" evidence="8">
    <location>
        <begin position="186"/>
        <end position="188"/>
    </location>
</feature>
<feature type="strand" evidence="7">
    <location>
        <begin position="190"/>
        <end position="196"/>
    </location>
</feature>
<feature type="turn" evidence="7">
    <location>
        <begin position="202"/>
        <end position="204"/>
    </location>
</feature>
<feature type="strand" evidence="7">
    <location>
        <begin position="206"/>
        <end position="220"/>
    </location>
</feature>
<feature type="strand" evidence="7">
    <location>
        <begin position="223"/>
        <end position="233"/>
    </location>
</feature>
<feature type="strand" evidence="7">
    <location>
        <begin position="241"/>
        <end position="243"/>
    </location>
</feature>
<feature type="strand" evidence="7">
    <location>
        <begin position="245"/>
        <end position="252"/>
    </location>
</feature>
<feature type="strand" evidence="7">
    <location>
        <begin position="260"/>
        <end position="263"/>
    </location>
</feature>
<feature type="helix" evidence="7">
    <location>
        <begin position="272"/>
        <end position="274"/>
    </location>
</feature>
<feature type="strand" evidence="7">
    <location>
        <begin position="278"/>
        <end position="283"/>
    </location>
</feature>
<feature type="helix" evidence="7">
    <location>
        <begin position="286"/>
        <end position="289"/>
    </location>
</feature>
<feature type="strand" evidence="7">
    <location>
        <begin position="292"/>
        <end position="294"/>
    </location>
</feature>
<feature type="turn" evidence="7">
    <location>
        <begin position="296"/>
        <end position="298"/>
    </location>
</feature>
<feature type="strand" evidence="7">
    <location>
        <begin position="300"/>
        <end position="303"/>
    </location>
</feature>
<feature type="turn" evidence="7">
    <location>
        <begin position="309"/>
        <end position="311"/>
    </location>
</feature>
<feature type="strand" evidence="7">
    <location>
        <begin position="313"/>
        <end position="322"/>
    </location>
</feature>
<feature type="strand" evidence="7">
    <location>
        <begin position="328"/>
        <end position="338"/>
    </location>
</feature>
<feature type="strand" evidence="7">
    <location>
        <begin position="346"/>
        <end position="352"/>
    </location>
</feature>
<feature type="strand" evidence="7">
    <location>
        <begin position="355"/>
        <end position="357"/>
    </location>
</feature>
<feature type="strand" evidence="7">
    <location>
        <begin position="365"/>
        <end position="372"/>
    </location>
</feature>
<feature type="helix" evidence="7">
    <location>
        <begin position="377"/>
        <end position="379"/>
    </location>
</feature>
<feature type="strand" evidence="7">
    <location>
        <begin position="382"/>
        <end position="388"/>
    </location>
</feature>
<feature type="strand" evidence="7">
    <location>
        <begin position="391"/>
        <end position="396"/>
    </location>
</feature>
<feature type="strand" evidence="7">
    <location>
        <begin position="398"/>
        <end position="406"/>
    </location>
</feature>
<feature type="turn" evidence="7">
    <location>
        <begin position="412"/>
        <end position="414"/>
    </location>
</feature>
<feature type="strand" evidence="7">
    <location>
        <begin position="417"/>
        <end position="426"/>
    </location>
</feature>
<feature type="strand" evidence="7">
    <location>
        <begin position="428"/>
        <end position="430"/>
    </location>
</feature>
<feature type="strand" evidence="7">
    <location>
        <begin position="433"/>
        <end position="443"/>
    </location>
</feature>
<accession>Q9Y5G1</accession>
<accession>A7E229</accession>
<accession>Q9Y5C7</accession>
<reference key="1">
    <citation type="journal article" date="1999" name="Cell">
        <title>A striking organization of a large family of human neural cadherin-like cell adhesion genes.</title>
        <authorList>
            <person name="Wu Q."/>
            <person name="Maniatis T."/>
        </authorList>
    </citation>
    <scope>NUCLEOTIDE SEQUENCE [MRNA] (ISOFORMS 1 AND 2)</scope>
    <scope>VARIANT VAL-28</scope>
    <source>
        <tissue>Brain</tissue>
    </source>
</reference>
<reference key="2">
    <citation type="journal article" date="2004" name="Nature">
        <title>The DNA sequence and comparative analysis of human chromosome 5.</title>
        <authorList>
            <person name="Schmutz J."/>
            <person name="Martin J."/>
            <person name="Terry A."/>
            <person name="Couronne O."/>
            <person name="Grimwood J."/>
            <person name="Lowry S."/>
            <person name="Gordon L.A."/>
            <person name="Scott D."/>
            <person name="Xie G."/>
            <person name="Huang W."/>
            <person name="Hellsten U."/>
            <person name="Tran-Gyamfi M."/>
            <person name="She X."/>
            <person name="Prabhakar S."/>
            <person name="Aerts A."/>
            <person name="Altherr M."/>
            <person name="Bajorek E."/>
            <person name="Black S."/>
            <person name="Branscomb E."/>
            <person name="Caoile C."/>
            <person name="Challacombe J.F."/>
            <person name="Chan Y.M."/>
            <person name="Denys M."/>
            <person name="Detter J.C."/>
            <person name="Escobar J."/>
            <person name="Flowers D."/>
            <person name="Fotopulos D."/>
            <person name="Glavina T."/>
            <person name="Gomez M."/>
            <person name="Gonzales E."/>
            <person name="Goodstein D."/>
            <person name="Grigoriev I."/>
            <person name="Groza M."/>
            <person name="Hammon N."/>
            <person name="Hawkins T."/>
            <person name="Haydu L."/>
            <person name="Israni S."/>
            <person name="Jett J."/>
            <person name="Kadner K."/>
            <person name="Kimball H."/>
            <person name="Kobayashi A."/>
            <person name="Lopez F."/>
            <person name="Lou Y."/>
            <person name="Martinez D."/>
            <person name="Medina C."/>
            <person name="Morgan J."/>
            <person name="Nandkeshwar R."/>
            <person name="Noonan J.P."/>
            <person name="Pitluck S."/>
            <person name="Pollard M."/>
            <person name="Predki P."/>
            <person name="Priest J."/>
            <person name="Ramirez L."/>
            <person name="Retterer J."/>
            <person name="Rodriguez A."/>
            <person name="Rogers S."/>
            <person name="Salamov A."/>
            <person name="Salazar A."/>
            <person name="Thayer N."/>
            <person name="Tice H."/>
            <person name="Tsai M."/>
            <person name="Ustaszewska A."/>
            <person name="Vo N."/>
            <person name="Wheeler J."/>
            <person name="Wu K."/>
            <person name="Yang J."/>
            <person name="Dickson M."/>
            <person name="Cheng J.-F."/>
            <person name="Eichler E.E."/>
            <person name="Olsen A."/>
            <person name="Pennacchio L.A."/>
            <person name="Rokhsar D.S."/>
            <person name="Richardson P."/>
            <person name="Lucas S.M."/>
            <person name="Myers R.M."/>
            <person name="Rubin E.M."/>
        </authorList>
    </citation>
    <scope>NUCLEOTIDE SEQUENCE [LARGE SCALE GENOMIC DNA]</scope>
</reference>
<reference key="3">
    <citation type="submission" date="2005-09" db="EMBL/GenBank/DDBJ databases">
        <authorList>
            <person name="Mural R.J."/>
            <person name="Istrail S."/>
            <person name="Sutton G.G."/>
            <person name="Florea L."/>
            <person name="Halpern A.L."/>
            <person name="Mobarry C.M."/>
            <person name="Lippert R."/>
            <person name="Walenz B."/>
            <person name="Shatkay H."/>
            <person name="Dew I."/>
            <person name="Miller J.R."/>
            <person name="Flanigan M.J."/>
            <person name="Edwards N.J."/>
            <person name="Bolanos R."/>
            <person name="Fasulo D."/>
            <person name="Halldorsson B.V."/>
            <person name="Hannenhalli S."/>
            <person name="Turner R."/>
            <person name="Yooseph S."/>
            <person name="Lu F."/>
            <person name="Nusskern D.R."/>
            <person name="Shue B.C."/>
            <person name="Zheng X.H."/>
            <person name="Zhong F."/>
            <person name="Delcher A.L."/>
            <person name="Huson D.H."/>
            <person name="Kravitz S.A."/>
            <person name="Mouchard L."/>
            <person name="Reinert K."/>
            <person name="Remington K.A."/>
            <person name="Clark A.G."/>
            <person name="Waterman M.S."/>
            <person name="Eichler E.E."/>
            <person name="Adams M.D."/>
            <person name="Hunkapiller M.W."/>
            <person name="Myers E.W."/>
            <person name="Venter J.C."/>
        </authorList>
    </citation>
    <scope>NUCLEOTIDE SEQUENCE [LARGE SCALE GENOMIC DNA]</scope>
</reference>
<reference key="4">
    <citation type="journal article" date="2004" name="Genome Res.">
        <title>The status, quality, and expansion of the NIH full-length cDNA project: the Mammalian Gene Collection (MGC).</title>
        <authorList>
            <consortium name="The MGC Project Team"/>
        </authorList>
    </citation>
    <scope>NUCLEOTIDE SEQUENCE [LARGE SCALE MRNA]</scope>
</reference>
<organism>
    <name type="scientific">Homo sapiens</name>
    <name type="common">Human</name>
    <dbReference type="NCBI Taxonomy" id="9606"/>
    <lineage>
        <taxon>Eukaryota</taxon>
        <taxon>Metazoa</taxon>
        <taxon>Chordata</taxon>
        <taxon>Craniata</taxon>
        <taxon>Vertebrata</taxon>
        <taxon>Euteleostomi</taxon>
        <taxon>Mammalia</taxon>
        <taxon>Eutheria</taxon>
        <taxon>Euarchontoglires</taxon>
        <taxon>Primates</taxon>
        <taxon>Haplorrhini</taxon>
        <taxon>Catarrhini</taxon>
        <taxon>Hominidae</taxon>
        <taxon>Homo</taxon>
    </lineage>
</organism>
<keyword id="KW-0002">3D-structure</keyword>
<keyword id="KW-0025">Alternative splicing</keyword>
<keyword id="KW-0106">Calcium</keyword>
<keyword id="KW-0130">Cell adhesion</keyword>
<keyword id="KW-1003">Cell membrane</keyword>
<keyword id="KW-0325">Glycoprotein</keyword>
<keyword id="KW-0472">Membrane</keyword>
<keyword id="KW-1267">Proteomics identification</keyword>
<keyword id="KW-1185">Reference proteome</keyword>
<keyword id="KW-0677">Repeat</keyword>
<keyword id="KW-0732">Signal</keyword>
<keyword id="KW-0812">Transmembrane</keyword>
<keyword id="KW-1133">Transmembrane helix</keyword>
<proteinExistence type="evidence at protein level"/>
<protein>
    <recommendedName>
        <fullName>Protocadherin gamma-B3</fullName>
        <shortName>PCDH-gamma-B3</shortName>
    </recommendedName>
</protein>